<dbReference type="EC" id="2.7.7.48"/>
<dbReference type="EC" id="3.6.4.13"/>
<dbReference type="EMBL" id="D12517">
    <property type="protein sequence ID" value="BAA02082.1"/>
    <property type="molecule type" value="Genomic_RNA"/>
</dbReference>
<dbReference type="PIR" id="JQ1426">
    <property type="entry name" value="RRWGSM"/>
</dbReference>
<dbReference type="RefSeq" id="NP_620642.1">
    <property type="nucleotide sequence ID" value="NC_003794.1"/>
</dbReference>
<dbReference type="GeneID" id="944372"/>
<dbReference type="KEGG" id="vg:944372"/>
<dbReference type="Proteomes" id="UP000007225">
    <property type="component" value="Genome"/>
</dbReference>
<dbReference type="GO" id="GO:0005524">
    <property type="term" value="F:ATP binding"/>
    <property type="evidence" value="ECO:0007669"/>
    <property type="project" value="UniProtKB-KW"/>
</dbReference>
<dbReference type="GO" id="GO:0016887">
    <property type="term" value="F:ATP hydrolysis activity"/>
    <property type="evidence" value="ECO:0007669"/>
    <property type="project" value="RHEA"/>
</dbReference>
<dbReference type="GO" id="GO:0008174">
    <property type="term" value="F:mRNA methyltransferase activity"/>
    <property type="evidence" value="ECO:0007669"/>
    <property type="project" value="InterPro"/>
</dbReference>
<dbReference type="GO" id="GO:0003723">
    <property type="term" value="F:RNA binding"/>
    <property type="evidence" value="ECO:0007669"/>
    <property type="project" value="InterPro"/>
</dbReference>
<dbReference type="GO" id="GO:0003724">
    <property type="term" value="F:RNA helicase activity"/>
    <property type="evidence" value="ECO:0007669"/>
    <property type="project" value="UniProtKB-EC"/>
</dbReference>
<dbReference type="GO" id="GO:0003968">
    <property type="term" value="F:RNA-directed RNA polymerase activity"/>
    <property type="evidence" value="ECO:0007669"/>
    <property type="project" value="UniProtKB-KW"/>
</dbReference>
<dbReference type="GO" id="GO:0006351">
    <property type="term" value="P:DNA-templated transcription"/>
    <property type="evidence" value="ECO:0007669"/>
    <property type="project" value="InterPro"/>
</dbReference>
<dbReference type="GO" id="GO:0016556">
    <property type="term" value="P:mRNA modification"/>
    <property type="evidence" value="ECO:0007669"/>
    <property type="project" value="InterPro"/>
</dbReference>
<dbReference type="GO" id="GO:0006396">
    <property type="term" value="P:RNA processing"/>
    <property type="evidence" value="ECO:0007669"/>
    <property type="project" value="InterPro"/>
</dbReference>
<dbReference type="GO" id="GO:0039694">
    <property type="term" value="P:viral RNA genome replication"/>
    <property type="evidence" value="ECO:0007669"/>
    <property type="project" value="InterPro"/>
</dbReference>
<dbReference type="CDD" id="cd23246">
    <property type="entry name" value="Alphaflexiviridae_RdRp"/>
    <property type="match status" value="1"/>
</dbReference>
<dbReference type="InterPro" id="IPR027351">
    <property type="entry name" value="(+)RNA_virus_helicase_core_dom"/>
</dbReference>
<dbReference type="InterPro" id="IPR002588">
    <property type="entry name" value="Alphavirus-like_MT_dom"/>
</dbReference>
<dbReference type="InterPro" id="IPR043502">
    <property type="entry name" value="DNA/RNA_pol_sf"/>
</dbReference>
<dbReference type="InterPro" id="IPR027417">
    <property type="entry name" value="P-loop_NTPase"/>
</dbReference>
<dbReference type="InterPro" id="IPR001788">
    <property type="entry name" value="RNA-dep_RNA_pol_alsuvir"/>
</dbReference>
<dbReference type="InterPro" id="IPR007094">
    <property type="entry name" value="RNA-dir_pol_PSvirus"/>
</dbReference>
<dbReference type="Pfam" id="PF00978">
    <property type="entry name" value="RdRP_2"/>
    <property type="match status" value="1"/>
</dbReference>
<dbReference type="Pfam" id="PF01443">
    <property type="entry name" value="Viral_helicase1"/>
    <property type="match status" value="1"/>
</dbReference>
<dbReference type="Pfam" id="PF01660">
    <property type="entry name" value="Vmethyltransf"/>
    <property type="match status" value="1"/>
</dbReference>
<dbReference type="SUPFAM" id="SSF56672">
    <property type="entry name" value="DNA/RNA polymerases"/>
    <property type="match status" value="1"/>
</dbReference>
<dbReference type="SUPFAM" id="SSF52540">
    <property type="entry name" value="P-loop containing nucleoside triphosphate hydrolases"/>
    <property type="match status" value="2"/>
</dbReference>
<dbReference type="PROSITE" id="PS51743">
    <property type="entry name" value="ALPHAVIRUS_MT"/>
    <property type="match status" value="1"/>
</dbReference>
<dbReference type="PROSITE" id="PS51657">
    <property type="entry name" value="PSRV_HELICASE"/>
    <property type="match status" value="1"/>
</dbReference>
<dbReference type="PROSITE" id="PS50507">
    <property type="entry name" value="RDRP_SSRNA_POS"/>
    <property type="match status" value="1"/>
</dbReference>
<organism>
    <name type="scientific">Strawberry mild yellow edge-associated virus</name>
    <name type="common">SMYEaV</name>
    <dbReference type="NCBI Taxonomy" id="12187"/>
    <lineage>
        <taxon>Viruses</taxon>
        <taxon>Riboviria</taxon>
        <taxon>Orthornavirae</taxon>
        <taxon>Kitrinoviricota</taxon>
        <taxon>Alsuviricetes</taxon>
        <taxon>Tymovirales</taxon>
        <taxon>Alphaflexiviridae</taxon>
        <taxon>Potexvirus</taxon>
    </lineage>
</organism>
<proteinExistence type="inferred from homology"/>
<protein>
    <recommendedName>
        <fullName>RNA replication protein</fullName>
    </recommendedName>
    <alternativeName>
        <fullName>150 kDa protein</fullName>
    </alternativeName>
    <alternativeName>
        <fullName>ORF1 protein</fullName>
    </alternativeName>
    <domain>
        <recommendedName>
            <fullName>RNA-directed RNA polymerase</fullName>
            <ecNumber>2.7.7.48</ecNumber>
        </recommendedName>
    </domain>
    <domain>
        <recommendedName>
            <fullName>Helicase</fullName>
            <ecNumber>3.6.4.13</ecNumber>
        </recommendedName>
    </domain>
</protein>
<sequence length="1323" mass="149594">MATRVASVFSSLTDVGIKAALQDEAYKRIKSNLREAEIINPYSVDARGAEALEELAIITNPHSIRLHTHAAAKSIENQMLNIVGHALPKEPVTFLFLKRGKLRYLSRGRIKDIFQNQEIEPRDVARYEHKTIVQKSLLLNTRVAYISDTLHFLRPRYIIDLFSQNVFLDVLYATVVLPVEASFKHPSQNPAIYTINYNYGGFQYLPGNHGGGAYSHEFEDLDWLKYGKFIYRWVDYRTDPISGKRVGTPKELVVTCQLVESLGANHLFIFKRGDLKTPRVRTFAKDKSVTFPDLFYPEEENANFPVDAELATKLFLYVKTLKTVTSQDVHGKLRQLLRSDELTRFSPMQLTHMVNYFMVVAHLDSCNDYSMLLGSSVWTQLTAPIQSKLRKLTEFFKGKSSFGKFCAALKWKTATYSLEVVDYVETRRDSFEPHPLDSLPDADDRDVNYDTDVSEDEADEKPAPKAPTSTPVPDTTPPASPAAPADAEYTQCWAAWDTVIRKHGFKGNQAQFDDDGNLITPIAEIKSLPKDSPRCAPELIKSLQEIARTPTLVEIDSKRSNAFGSDVKNGRIGMILKKQPNDWRLSFAAKCEHTSRKVHACVIHGAGGSGKSQRLQDWMRSLKKNSRECTVILPTAELRTDWVNKVPKQSLDTFKTWEKGLVQPPNRVVILDDYGKLPAGYPEALCANYPNIELLILTGDSRQSVHNEHNKQAATASLESNIEFWTQYCRFYVNATHRNVKRLANALGVYGERDEPLKVTCSSHVYDGWPVLAPGLLKAGNLAECGRRAFTYAGCQGLTAPRVQILLDNDTPLCSQRVMYTALSRAVNEIHFVNTGPSGDDFWTKLDCTPFLKTFLELSREIEIPEAKCQETAPAEATVKTHFPVENPNLVLEPYVEKMAEKFDRELYSKEYGYSNAIQTEDPVIQLFPHQQAKDDTLMWATIDQRLAITTKSENETEFALKKDIGDLLFINYHRAMKLPKNPIPFDKDLWQSCKNEVQKTYLSKDVGSIVNGVARQDPDFPINEIKLFLKSQWVKKVEKLGMVVKPGQTIASFAQAPVMLYGTMARYMRRMREVYQPSNIFINCEKTPADLDEWAKANWNFEGLAHSNDFTAFDQSQDGAMLQFEVIKAKFHNIPSDIINSYVELKTNAKVFLGVLKIMRLSGEGPTFDANTECSIAYHHTKYWVEPDVAQVYAGDDSAQDRTPVPRPSFNKIKDRLGLVSKPLTHRQVPGDFATFCGWIITPKGVIKDPLKLYASLQLAIRRGKSHEVALSYAHDAGLAYRLGDDLHSVLTFDEAHAHQCTVRDLVKLNKVEVLRPIWALD</sequence>
<keyword id="KW-0067">ATP-binding</keyword>
<keyword id="KW-0347">Helicase</keyword>
<keyword id="KW-0378">Hydrolase</keyword>
<keyword id="KW-0511">Multifunctional enzyme</keyword>
<keyword id="KW-0547">Nucleotide-binding</keyword>
<keyword id="KW-0548">Nucleotidyltransferase</keyword>
<keyword id="KW-1185">Reference proteome</keyword>
<keyword id="KW-0696">RNA-directed RNA polymerase</keyword>
<keyword id="KW-0808">Transferase</keyword>
<keyword id="KW-0693">Viral RNA replication</keyword>
<comment type="function">
    <text evidence="5">RNA replication. The central part of this protein possibly functions as an ATP-binding helicase (Probable).</text>
</comment>
<comment type="catalytic activity">
    <reaction evidence="2">
        <text>RNA(n) + a ribonucleoside 5'-triphosphate = RNA(n+1) + diphosphate</text>
        <dbReference type="Rhea" id="RHEA:21248"/>
        <dbReference type="Rhea" id="RHEA-COMP:14527"/>
        <dbReference type="Rhea" id="RHEA-COMP:17342"/>
        <dbReference type="ChEBI" id="CHEBI:33019"/>
        <dbReference type="ChEBI" id="CHEBI:61557"/>
        <dbReference type="ChEBI" id="CHEBI:140395"/>
        <dbReference type="EC" id="2.7.7.48"/>
    </reaction>
</comment>
<comment type="catalytic activity">
    <reaction>
        <text>ATP + H2O = ADP + phosphate + H(+)</text>
        <dbReference type="Rhea" id="RHEA:13065"/>
        <dbReference type="ChEBI" id="CHEBI:15377"/>
        <dbReference type="ChEBI" id="CHEBI:15378"/>
        <dbReference type="ChEBI" id="CHEBI:30616"/>
        <dbReference type="ChEBI" id="CHEBI:43474"/>
        <dbReference type="ChEBI" id="CHEBI:456216"/>
        <dbReference type="EC" id="3.6.4.13"/>
    </reaction>
</comment>
<comment type="similarity">
    <text evidence="5">Belongs to the potexvirus/carlavirus RNA replication protein family.</text>
</comment>
<evidence type="ECO:0000255" key="1"/>
<evidence type="ECO:0000255" key="2">
    <source>
        <dbReference type="PROSITE-ProRule" id="PRU00539"/>
    </source>
</evidence>
<evidence type="ECO:0000255" key="3">
    <source>
        <dbReference type="PROSITE-ProRule" id="PRU01079"/>
    </source>
</evidence>
<evidence type="ECO:0000256" key="4">
    <source>
        <dbReference type="SAM" id="MobiDB-lite"/>
    </source>
</evidence>
<evidence type="ECO:0000305" key="5"/>
<organismHost>
    <name type="scientific">Chenopodium quinoa</name>
    <name type="common">Quinoa</name>
    <dbReference type="NCBI Taxonomy" id="63459"/>
</organismHost>
<organismHost>
    <name type="scientific">Fragaria vesca</name>
    <name type="common">Woodland strawberry</name>
    <name type="synonym">Potentilla vesca</name>
    <dbReference type="NCBI Taxonomy" id="57918"/>
</organismHost>
<organismHost>
    <name type="scientific">Rubus rosifolius</name>
    <dbReference type="NCBI Taxonomy" id="59498"/>
</organismHost>
<reference key="1">
    <citation type="journal article" date="1992" name="J. Gen. Virol.">
        <title>The nucleotide sequence and genome organization of strawberry mild yellow edge-associated potexvirus.</title>
        <authorList>
            <person name="Jelkmann W."/>
            <person name="Maiss E."/>
            <person name="Martin R.R."/>
        </authorList>
    </citation>
    <scope>NUCLEOTIDE SEQUENCE [GENOMIC RNA]</scope>
    <source>
        <strain>MY-18</strain>
    </source>
</reference>
<feature type="chain" id="PRO_0000222557" description="RNA replication protein">
    <location>
        <begin position="1"/>
        <end position="1323"/>
    </location>
</feature>
<feature type="domain" description="Alphavirus-like MT" evidence="3">
    <location>
        <begin position="60"/>
        <end position="224"/>
    </location>
</feature>
<feature type="domain" description="(+)RNA virus helicase ATP-binding">
    <location>
        <begin position="572"/>
        <end position="733"/>
    </location>
</feature>
<feature type="domain" description="(+)RNA virus helicase C-terminal">
    <location>
        <begin position="734"/>
        <end position="867"/>
    </location>
</feature>
<feature type="domain" description="RdRp catalytic" evidence="2">
    <location>
        <begin position="1104"/>
        <end position="1211"/>
    </location>
</feature>
<feature type="region of interest" description="Disordered" evidence="4">
    <location>
        <begin position="432"/>
        <end position="486"/>
    </location>
</feature>
<feature type="binding site" evidence="1">
    <location>
        <begin position="605"/>
        <end position="612"/>
    </location>
    <ligand>
        <name>ATP</name>
        <dbReference type="ChEBI" id="CHEBI:30616"/>
    </ligand>
</feature>
<name>RDRP_SMYEA</name>
<accession>P28897</accession>